<gene>
    <name evidence="1" type="primary">apt</name>
    <name type="ordered locus">MXAN_5352</name>
</gene>
<feature type="chain" id="PRO_0000321373" description="Adenine phosphoribosyltransferase">
    <location>
        <begin position="1"/>
        <end position="184"/>
    </location>
</feature>
<evidence type="ECO:0000255" key="1">
    <source>
        <dbReference type="HAMAP-Rule" id="MF_00004"/>
    </source>
</evidence>
<reference key="1">
    <citation type="journal article" date="2006" name="Proc. Natl. Acad. Sci. U.S.A.">
        <title>Evolution of sensory complexity recorded in a myxobacterial genome.</title>
        <authorList>
            <person name="Goldman B.S."/>
            <person name="Nierman W.C."/>
            <person name="Kaiser D."/>
            <person name="Slater S.C."/>
            <person name="Durkin A.S."/>
            <person name="Eisen J.A."/>
            <person name="Ronning C.M."/>
            <person name="Barbazuk W.B."/>
            <person name="Blanchard M."/>
            <person name="Field C."/>
            <person name="Halling C."/>
            <person name="Hinkle G."/>
            <person name="Iartchuk O."/>
            <person name="Kim H.S."/>
            <person name="Mackenzie C."/>
            <person name="Madupu R."/>
            <person name="Miller N."/>
            <person name="Shvartsbeyn A."/>
            <person name="Sullivan S.A."/>
            <person name="Vaudin M."/>
            <person name="Wiegand R."/>
            <person name="Kaplan H.B."/>
        </authorList>
    </citation>
    <scope>NUCLEOTIDE SEQUENCE [LARGE SCALE GENOMIC DNA]</scope>
    <source>
        <strain>DK1622</strain>
    </source>
</reference>
<comment type="function">
    <text evidence="1">Catalyzes a salvage reaction resulting in the formation of AMP, that is energically less costly than de novo synthesis.</text>
</comment>
<comment type="catalytic activity">
    <reaction evidence="1">
        <text>AMP + diphosphate = 5-phospho-alpha-D-ribose 1-diphosphate + adenine</text>
        <dbReference type="Rhea" id="RHEA:16609"/>
        <dbReference type="ChEBI" id="CHEBI:16708"/>
        <dbReference type="ChEBI" id="CHEBI:33019"/>
        <dbReference type="ChEBI" id="CHEBI:58017"/>
        <dbReference type="ChEBI" id="CHEBI:456215"/>
        <dbReference type="EC" id="2.4.2.7"/>
    </reaction>
</comment>
<comment type="pathway">
    <text evidence="1">Purine metabolism; AMP biosynthesis via salvage pathway; AMP from adenine: step 1/1.</text>
</comment>
<comment type="subunit">
    <text evidence="1">Homodimer.</text>
</comment>
<comment type="subcellular location">
    <subcellularLocation>
        <location evidence="1">Cytoplasm</location>
    </subcellularLocation>
</comment>
<comment type="similarity">
    <text evidence="1">Belongs to the purine/pyrimidine phosphoribosyltransferase family.</text>
</comment>
<organism>
    <name type="scientific">Myxococcus xanthus (strain DK1622)</name>
    <dbReference type="NCBI Taxonomy" id="246197"/>
    <lineage>
        <taxon>Bacteria</taxon>
        <taxon>Pseudomonadati</taxon>
        <taxon>Myxococcota</taxon>
        <taxon>Myxococcia</taxon>
        <taxon>Myxococcales</taxon>
        <taxon>Cystobacterineae</taxon>
        <taxon>Myxococcaceae</taxon>
        <taxon>Myxococcus</taxon>
    </lineage>
</organism>
<proteinExistence type="inferred from homology"/>
<keyword id="KW-0963">Cytoplasm</keyword>
<keyword id="KW-0328">Glycosyltransferase</keyword>
<keyword id="KW-0660">Purine salvage</keyword>
<keyword id="KW-1185">Reference proteome</keyword>
<keyword id="KW-0808">Transferase</keyword>
<dbReference type="EC" id="2.4.2.7" evidence="1"/>
<dbReference type="EMBL" id="CP000113">
    <property type="protein sequence ID" value="ABF91841.1"/>
    <property type="molecule type" value="Genomic_DNA"/>
</dbReference>
<dbReference type="RefSeq" id="WP_011555317.1">
    <property type="nucleotide sequence ID" value="NC_008095.1"/>
</dbReference>
<dbReference type="SMR" id="Q1D1H1"/>
<dbReference type="STRING" id="246197.MXAN_5352"/>
<dbReference type="EnsemblBacteria" id="ABF91841">
    <property type="protein sequence ID" value="ABF91841"/>
    <property type="gene ID" value="MXAN_5352"/>
</dbReference>
<dbReference type="GeneID" id="41362621"/>
<dbReference type="KEGG" id="mxa:MXAN_5352"/>
<dbReference type="eggNOG" id="COG0503">
    <property type="taxonomic scope" value="Bacteria"/>
</dbReference>
<dbReference type="HOGENOM" id="CLU_063339_3_3_7"/>
<dbReference type="OrthoDB" id="9803963at2"/>
<dbReference type="UniPathway" id="UPA00588">
    <property type="reaction ID" value="UER00646"/>
</dbReference>
<dbReference type="Proteomes" id="UP000002402">
    <property type="component" value="Chromosome"/>
</dbReference>
<dbReference type="GO" id="GO:0005737">
    <property type="term" value="C:cytoplasm"/>
    <property type="evidence" value="ECO:0007669"/>
    <property type="project" value="UniProtKB-SubCell"/>
</dbReference>
<dbReference type="GO" id="GO:0002055">
    <property type="term" value="F:adenine binding"/>
    <property type="evidence" value="ECO:0007669"/>
    <property type="project" value="TreeGrafter"/>
</dbReference>
<dbReference type="GO" id="GO:0003999">
    <property type="term" value="F:adenine phosphoribosyltransferase activity"/>
    <property type="evidence" value="ECO:0007669"/>
    <property type="project" value="UniProtKB-UniRule"/>
</dbReference>
<dbReference type="GO" id="GO:0016208">
    <property type="term" value="F:AMP binding"/>
    <property type="evidence" value="ECO:0007669"/>
    <property type="project" value="TreeGrafter"/>
</dbReference>
<dbReference type="GO" id="GO:0006168">
    <property type="term" value="P:adenine salvage"/>
    <property type="evidence" value="ECO:0007669"/>
    <property type="project" value="InterPro"/>
</dbReference>
<dbReference type="GO" id="GO:0044209">
    <property type="term" value="P:AMP salvage"/>
    <property type="evidence" value="ECO:0007669"/>
    <property type="project" value="UniProtKB-UniRule"/>
</dbReference>
<dbReference type="GO" id="GO:0006166">
    <property type="term" value="P:purine ribonucleoside salvage"/>
    <property type="evidence" value="ECO:0007669"/>
    <property type="project" value="UniProtKB-KW"/>
</dbReference>
<dbReference type="CDD" id="cd06223">
    <property type="entry name" value="PRTases_typeI"/>
    <property type="match status" value="1"/>
</dbReference>
<dbReference type="FunFam" id="3.40.50.2020:FF:000021">
    <property type="entry name" value="Adenine phosphoribosyltransferase"/>
    <property type="match status" value="1"/>
</dbReference>
<dbReference type="Gene3D" id="3.40.50.2020">
    <property type="match status" value="1"/>
</dbReference>
<dbReference type="HAMAP" id="MF_00004">
    <property type="entry name" value="Aden_phosphoribosyltr"/>
    <property type="match status" value="1"/>
</dbReference>
<dbReference type="InterPro" id="IPR005764">
    <property type="entry name" value="Ade_phspho_trans"/>
</dbReference>
<dbReference type="InterPro" id="IPR000836">
    <property type="entry name" value="PRibTrfase_dom"/>
</dbReference>
<dbReference type="InterPro" id="IPR029057">
    <property type="entry name" value="PRTase-like"/>
</dbReference>
<dbReference type="InterPro" id="IPR050054">
    <property type="entry name" value="UPRTase/APRTase"/>
</dbReference>
<dbReference type="NCBIfam" id="TIGR01090">
    <property type="entry name" value="apt"/>
    <property type="match status" value="1"/>
</dbReference>
<dbReference type="NCBIfam" id="NF002634">
    <property type="entry name" value="PRK02304.1-3"/>
    <property type="match status" value="1"/>
</dbReference>
<dbReference type="NCBIfam" id="NF002636">
    <property type="entry name" value="PRK02304.1-5"/>
    <property type="match status" value="1"/>
</dbReference>
<dbReference type="PANTHER" id="PTHR32315">
    <property type="entry name" value="ADENINE PHOSPHORIBOSYLTRANSFERASE"/>
    <property type="match status" value="1"/>
</dbReference>
<dbReference type="PANTHER" id="PTHR32315:SF3">
    <property type="entry name" value="ADENINE PHOSPHORIBOSYLTRANSFERASE"/>
    <property type="match status" value="1"/>
</dbReference>
<dbReference type="Pfam" id="PF00156">
    <property type="entry name" value="Pribosyltran"/>
    <property type="match status" value="1"/>
</dbReference>
<dbReference type="SUPFAM" id="SSF53271">
    <property type="entry name" value="PRTase-like"/>
    <property type="match status" value="1"/>
</dbReference>
<dbReference type="PROSITE" id="PS00103">
    <property type="entry name" value="PUR_PYR_PR_TRANSFER"/>
    <property type="match status" value="1"/>
</dbReference>
<accession>Q1D1H1</accession>
<protein>
    <recommendedName>
        <fullName evidence="1">Adenine phosphoribosyltransferase</fullName>
        <shortName evidence="1">APRT</shortName>
        <ecNumber evidence="1">2.4.2.7</ecNumber>
    </recommendedName>
</protein>
<sequence>MHPPVPSLTDTTLVADLNARLRDVPDFPKPGIVFKDITPVLADPRLFGRVIDAMSAPFRGQHVTKVVGVEARGFLLGAPIALALNAGFVPARKPGKLPHRSVVERYSLEYGSDGVEMHEDAILQGERVLVVDDVLATGGTAEATARLVSRLGGELVGFCFLLSLDFLEGPNRLGRERVTTLLTF</sequence>
<name>APT_MYXXD</name>